<name>RS9_BACAH</name>
<proteinExistence type="inferred from homology"/>
<evidence type="ECO:0000255" key="1">
    <source>
        <dbReference type="HAMAP-Rule" id="MF_00532"/>
    </source>
</evidence>
<evidence type="ECO:0000305" key="2"/>
<comment type="similarity">
    <text evidence="1">Belongs to the universal ribosomal protein uS9 family.</text>
</comment>
<feature type="chain" id="PRO_1000051161" description="Small ribosomal subunit protein uS9">
    <location>
        <begin position="1"/>
        <end position="130"/>
    </location>
</feature>
<organism>
    <name type="scientific">Bacillus thuringiensis (strain Al Hakam)</name>
    <dbReference type="NCBI Taxonomy" id="412694"/>
    <lineage>
        <taxon>Bacteria</taxon>
        <taxon>Bacillati</taxon>
        <taxon>Bacillota</taxon>
        <taxon>Bacilli</taxon>
        <taxon>Bacillales</taxon>
        <taxon>Bacillaceae</taxon>
        <taxon>Bacillus</taxon>
        <taxon>Bacillus cereus group</taxon>
    </lineage>
</organism>
<dbReference type="EMBL" id="CP000485">
    <property type="protein sequence ID" value="ABK83556.1"/>
    <property type="molecule type" value="Genomic_DNA"/>
</dbReference>
<dbReference type="RefSeq" id="WP_000079986.1">
    <property type="nucleotide sequence ID" value="NC_008600.1"/>
</dbReference>
<dbReference type="SMR" id="A0R8L3"/>
<dbReference type="GeneID" id="93010909"/>
<dbReference type="KEGG" id="btl:BALH_0142"/>
<dbReference type="HOGENOM" id="CLU_046483_2_1_9"/>
<dbReference type="GO" id="GO:0022627">
    <property type="term" value="C:cytosolic small ribosomal subunit"/>
    <property type="evidence" value="ECO:0007669"/>
    <property type="project" value="TreeGrafter"/>
</dbReference>
<dbReference type="GO" id="GO:0003723">
    <property type="term" value="F:RNA binding"/>
    <property type="evidence" value="ECO:0007669"/>
    <property type="project" value="TreeGrafter"/>
</dbReference>
<dbReference type="GO" id="GO:0003735">
    <property type="term" value="F:structural constituent of ribosome"/>
    <property type="evidence" value="ECO:0007669"/>
    <property type="project" value="InterPro"/>
</dbReference>
<dbReference type="GO" id="GO:0006412">
    <property type="term" value="P:translation"/>
    <property type="evidence" value="ECO:0007669"/>
    <property type="project" value="UniProtKB-UniRule"/>
</dbReference>
<dbReference type="FunFam" id="3.30.230.10:FF:000001">
    <property type="entry name" value="30S ribosomal protein S9"/>
    <property type="match status" value="1"/>
</dbReference>
<dbReference type="Gene3D" id="3.30.230.10">
    <property type="match status" value="1"/>
</dbReference>
<dbReference type="HAMAP" id="MF_00532_B">
    <property type="entry name" value="Ribosomal_uS9_B"/>
    <property type="match status" value="1"/>
</dbReference>
<dbReference type="InterPro" id="IPR020568">
    <property type="entry name" value="Ribosomal_Su5_D2-typ_SF"/>
</dbReference>
<dbReference type="InterPro" id="IPR000754">
    <property type="entry name" value="Ribosomal_uS9"/>
</dbReference>
<dbReference type="InterPro" id="IPR023035">
    <property type="entry name" value="Ribosomal_uS9_bac/plastid"/>
</dbReference>
<dbReference type="InterPro" id="IPR020574">
    <property type="entry name" value="Ribosomal_uS9_CS"/>
</dbReference>
<dbReference type="InterPro" id="IPR014721">
    <property type="entry name" value="Ribsml_uS5_D2-typ_fold_subgr"/>
</dbReference>
<dbReference type="NCBIfam" id="NF001099">
    <property type="entry name" value="PRK00132.1"/>
    <property type="match status" value="1"/>
</dbReference>
<dbReference type="PANTHER" id="PTHR21569">
    <property type="entry name" value="RIBOSOMAL PROTEIN S9"/>
    <property type="match status" value="1"/>
</dbReference>
<dbReference type="PANTHER" id="PTHR21569:SF1">
    <property type="entry name" value="SMALL RIBOSOMAL SUBUNIT PROTEIN US9M"/>
    <property type="match status" value="1"/>
</dbReference>
<dbReference type="Pfam" id="PF00380">
    <property type="entry name" value="Ribosomal_S9"/>
    <property type="match status" value="1"/>
</dbReference>
<dbReference type="SUPFAM" id="SSF54211">
    <property type="entry name" value="Ribosomal protein S5 domain 2-like"/>
    <property type="match status" value="1"/>
</dbReference>
<dbReference type="PROSITE" id="PS00360">
    <property type="entry name" value="RIBOSOMAL_S9"/>
    <property type="match status" value="1"/>
</dbReference>
<reference key="1">
    <citation type="journal article" date="2007" name="J. Bacteriol.">
        <title>The complete genome sequence of Bacillus thuringiensis Al Hakam.</title>
        <authorList>
            <person name="Challacombe J.F."/>
            <person name="Altherr M.R."/>
            <person name="Xie G."/>
            <person name="Bhotika S.S."/>
            <person name="Brown N."/>
            <person name="Bruce D."/>
            <person name="Campbell C.S."/>
            <person name="Campbell M.L."/>
            <person name="Chen J."/>
            <person name="Chertkov O."/>
            <person name="Cleland C."/>
            <person name="Dimitrijevic M."/>
            <person name="Doggett N.A."/>
            <person name="Fawcett J.J."/>
            <person name="Glavina T."/>
            <person name="Goodwin L.A."/>
            <person name="Green L.D."/>
            <person name="Han C.S."/>
            <person name="Hill K.K."/>
            <person name="Hitchcock P."/>
            <person name="Jackson P.J."/>
            <person name="Keim P."/>
            <person name="Kewalramani A.R."/>
            <person name="Longmire J."/>
            <person name="Lucas S."/>
            <person name="Malfatti S."/>
            <person name="Martinez D."/>
            <person name="McMurry K."/>
            <person name="Meincke L.J."/>
            <person name="Misra M."/>
            <person name="Moseman B.L."/>
            <person name="Mundt M."/>
            <person name="Munk A.C."/>
            <person name="Okinaka R.T."/>
            <person name="Parson-Quintana B."/>
            <person name="Reilly L.P."/>
            <person name="Richardson P."/>
            <person name="Robinson D.L."/>
            <person name="Saunders E."/>
            <person name="Tapia R."/>
            <person name="Tesmer J.G."/>
            <person name="Thayer N."/>
            <person name="Thompson L.S."/>
            <person name="Tice H."/>
            <person name="Ticknor L.O."/>
            <person name="Wills P.L."/>
            <person name="Gilna P."/>
            <person name="Brettin T.S."/>
        </authorList>
    </citation>
    <scope>NUCLEOTIDE SEQUENCE [LARGE SCALE GENOMIC DNA]</scope>
    <source>
        <strain>Al Hakam</strain>
    </source>
</reference>
<accession>A0R8L3</accession>
<keyword id="KW-0687">Ribonucleoprotein</keyword>
<keyword id="KW-0689">Ribosomal protein</keyword>
<sequence>MAQVQYYGTGRRKSSVARVRLVPGEGRVIINGRDFENYIPFAALREVVKQPLVATETLGNYDVLVNVNGGGYTGQAGAIRHGISRALLKADPEYRLTLKRAGLLTRDARMKERKKYGLKGARRAPQFSKR</sequence>
<gene>
    <name evidence="1" type="primary">rpsI</name>
    <name type="ordered locus">BALH_0142</name>
</gene>
<protein>
    <recommendedName>
        <fullName evidence="1">Small ribosomal subunit protein uS9</fullName>
    </recommendedName>
    <alternativeName>
        <fullName evidence="2">30S ribosomal protein S9</fullName>
    </alternativeName>
</protein>